<accession>Q07L51</accession>
<evidence type="ECO:0000255" key="1">
    <source>
        <dbReference type="HAMAP-Rule" id="MF_00336"/>
    </source>
</evidence>
<sequence>MSPRVVVTGTDTGIGKTVFSAALVGALDGVYWKPVQAGLDEETDRDTVLRLSGLPAERMLPEAYRLNTPASPHLAAEIDGVTIDPAKLALPQHDRPLVVEGAGGLLTPLTRSVSYIDVIASWHAPVVLCARTTLGTINHSLLSIEALRARDIELLGIAFIGEAHAESENIIAAMGQVRRLGRLPHLASLTTDSLKAAFADAFNIGDFFKDATA</sequence>
<protein>
    <recommendedName>
        <fullName evidence="1">ATP-dependent dethiobiotin synthetase BioD</fullName>
        <ecNumber evidence="1">6.3.3.3</ecNumber>
    </recommendedName>
    <alternativeName>
        <fullName evidence="1">DTB synthetase</fullName>
        <shortName evidence="1">DTBS</shortName>
    </alternativeName>
    <alternativeName>
        <fullName evidence="1">Dethiobiotin synthase</fullName>
    </alternativeName>
</protein>
<proteinExistence type="inferred from homology"/>
<keyword id="KW-0067">ATP-binding</keyword>
<keyword id="KW-0093">Biotin biosynthesis</keyword>
<keyword id="KW-0963">Cytoplasm</keyword>
<keyword id="KW-0436">Ligase</keyword>
<keyword id="KW-0460">Magnesium</keyword>
<keyword id="KW-0479">Metal-binding</keyword>
<keyword id="KW-0547">Nucleotide-binding</keyword>
<gene>
    <name evidence="1" type="primary">bioD</name>
    <name type="ordered locus">RPE_3401</name>
</gene>
<organism>
    <name type="scientific">Rhodopseudomonas palustris (strain BisA53)</name>
    <dbReference type="NCBI Taxonomy" id="316055"/>
    <lineage>
        <taxon>Bacteria</taxon>
        <taxon>Pseudomonadati</taxon>
        <taxon>Pseudomonadota</taxon>
        <taxon>Alphaproteobacteria</taxon>
        <taxon>Hyphomicrobiales</taxon>
        <taxon>Nitrobacteraceae</taxon>
        <taxon>Rhodopseudomonas</taxon>
    </lineage>
</organism>
<reference key="1">
    <citation type="submission" date="2006-09" db="EMBL/GenBank/DDBJ databases">
        <title>Complete sequence of Rhodopseudomonas palustris BisA53.</title>
        <authorList>
            <consortium name="US DOE Joint Genome Institute"/>
            <person name="Copeland A."/>
            <person name="Lucas S."/>
            <person name="Lapidus A."/>
            <person name="Barry K."/>
            <person name="Detter J.C."/>
            <person name="Glavina del Rio T."/>
            <person name="Hammon N."/>
            <person name="Israni S."/>
            <person name="Dalin E."/>
            <person name="Tice H."/>
            <person name="Pitluck S."/>
            <person name="Chain P."/>
            <person name="Malfatti S."/>
            <person name="Shin M."/>
            <person name="Vergez L."/>
            <person name="Schmutz J."/>
            <person name="Larimer F."/>
            <person name="Land M."/>
            <person name="Hauser L."/>
            <person name="Pelletier D.A."/>
            <person name="Kyrpides N."/>
            <person name="Kim E."/>
            <person name="Harwood C.S."/>
            <person name="Oda Y."/>
            <person name="Richardson P."/>
        </authorList>
    </citation>
    <scope>NUCLEOTIDE SEQUENCE [LARGE SCALE GENOMIC DNA]</scope>
    <source>
        <strain>BisA53</strain>
    </source>
</reference>
<dbReference type="EC" id="6.3.3.3" evidence="1"/>
<dbReference type="EMBL" id="CP000463">
    <property type="protein sequence ID" value="ABJ07333.1"/>
    <property type="molecule type" value="Genomic_DNA"/>
</dbReference>
<dbReference type="SMR" id="Q07L51"/>
<dbReference type="STRING" id="316055.RPE_3401"/>
<dbReference type="KEGG" id="rpe:RPE_3401"/>
<dbReference type="eggNOG" id="COG0132">
    <property type="taxonomic scope" value="Bacteria"/>
</dbReference>
<dbReference type="HOGENOM" id="CLU_072551_2_0_5"/>
<dbReference type="OrthoDB" id="9802097at2"/>
<dbReference type="UniPathway" id="UPA00078">
    <property type="reaction ID" value="UER00161"/>
</dbReference>
<dbReference type="GO" id="GO:0005829">
    <property type="term" value="C:cytosol"/>
    <property type="evidence" value="ECO:0007669"/>
    <property type="project" value="TreeGrafter"/>
</dbReference>
<dbReference type="GO" id="GO:0005524">
    <property type="term" value="F:ATP binding"/>
    <property type="evidence" value="ECO:0007669"/>
    <property type="project" value="UniProtKB-UniRule"/>
</dbReference>
<dbReference type="GO" id="GO:0004141">
    <property type="term" value="F:dethiobiotin synthase activity"/>
    <property type="evidence" value="ECO:0007669"/>
    <property type="project" value="UniProtKB-UniRule"/>
</dbReference>
<dbReference type="GO" id="GO:0000287">
    <property type="term" value="F:magnesium ion binding"/>
    <property type="evidence" value="ECO:0007669"/>
    <property type="project" value="UniProtKB-UniRule"/>
</dbReference>
<dbReference type="GO" id="GO:0009102">
    <property type="term" value="P:biotin biosynthetic process"/>
    <property type="evidence" value="ECO:0007669"/>
    <property type="project" value="UniProtKB-UniRule"/>
</dbReference>
<dbReference type="CDD" id="cd03109">
    <property type="entry name" value="DTBS"/>
    <property type="match status" value="1"/>
</dbReference>
<dbReference type="Gene3D" id="3.40.50.300">
    <property type="entry name" value="P-loop containing nucleotide triphosphate hydrolases"/>
    <property type="match status" value="1"/>
</dbReference>
<dbReference type="HAMAP" id="MF_00336">
    <property type="entry name" value="BioD"/>
    <property type="match status" value="1"/>
</dbReference>
<dbReference type="InterPro" id="IPR004472">
    <property type="entry name" value="DTB_synth_BioD"/>
</dbReference>
<dbReference type="InterPro" id="IPR027417">
    <property type="entry name" value="P-loop_NTPase"/>
</dbReference>
<dbReference type="NCBIfam" id="TIGR00347">
    <property type="entry name" value="bioD"/>
    <property type="match status" value="1"/>
</dbReference>
<dbReference type="PANTHER" id="PTHR43210:SF2">
    <property type="entry name" value="ATP-DEPENDENT DETHIOBIOTIN SYNTHETASE BIOD 2"/>
    <property type="match status" value="1"/>
</dbReference>
<dbReference type="PANTHER" id="PTHR43210">
    <property type="entry name" value="DETHIOBIOTIN SYNTHETASE"/>
    <property type="match status" value="1"/>
</dbReference>
<dbReference type="Pfam" id="PF13500">
    <property type="entry name" value="AAA_26"/>
    <property type="match status" value="1"/>
</dbReference>
<dbReference type="PIRSF" id="PIRSF006755">
    <property type="entry name" value="DTB_synth"/>
    <property type="match status" value="1"/>
</dbReference>
<dbReference type="SUPFAM" id="SSF52540">
    <property type="entry name" value="P-loop containing nucleoside triphosphate hydrolases"/>
    <property type="match status" value="1"/>
</dbReference>
<comment type="function">
    <text evidence="1">Catalyzes a mechanistically unusual reaction, the ATP-dependent insertion of CO2 between the N7 and N8 nitrogen atoms of 7,8-diaminopelargonic acid (DAPA, also called 7,8-diammoniononanoate) to form a ureido ring.</text>
</comment>
<comment type="catalytic activity">
    <reaction evidence="1">
        <text>(7R,8S)-7,8-diammoniononanoate + CO2 + ATP = (4R,5S)-dethiobiotin + ADP + phosphate + 3 H(+)</text>
        <dbReference type="Rhea" id="RHEA:15805"/>
        <dbReference type="ChEBI" id="CHEBI:15378"/>
        <dbReference type="ChEBI" id="CHEBI:16526"/>
        <dbReference type="ChEBI" id="CHEBI:30616"/>
        <dbReference type="ChEBI" id="CHEBI:43474"/>
        <dbReference type="ChEBI" id="CHEBI:149469"/>
        <dbReference type="ChEBI" id="CHEBI:149473"/>
        <dbReference type="ChEBI" id="CHEBI:456216"/>
        <dbReference type="EC" id="6.3.3.3"/>
    </reaction>
</comment>
<comment type="cofactor">
    <cofactor evidence="1">
        <name>Mg(2+)</name>
        <dbReference type="ChEBI" id="CHEBI:18420"/>
    </cofactor>
</comment>
<comment type="pathway">
    <text evidence="1">Cofactor biosynthesis; biotin biosynthesis; biotin from 7,8-diaminononanoate: step 1/2.</text>
</comment>
<comment type="subunit">
    <text evidence="1">Homodimer.</text>
</comment>
<comment type="subcellular location">
    <subcellularLocation>
        <location evidence="1">Cytoplasm</location>
    </subcellularLocation>
</comment>
<comment type="similarity">
    <text evidence="1">Belongs to the dethiobiotin synthetase family.</text>
</comment>
<name>BIOD_RHOP5</name>
<feature type="chain" id="PRO_0000302544" description="ATP-dependent dethiobiotin synthetase BioD">
    <location>
        <begin position="1"/>
        <end position="213"/>
    </location>
</feature>
<feature type="active site" evidence="1">
    <location>
        <position position="33"/>
    </location>
</feature>
<feature type="binding site" evidence="1">
    <location>
        <begin position="13"/>
        <end position="18"/>
    </location>
    <ligand>
        <name>ATP</name>
        <dbReference type="ChEBI" id="CHEBI:30616"/>
    </ligand>
</feature>
<feature type="binding site" evidence="1">
    <location>
        <position position="17"/>
    </location>
    <ligand>
        <name>Mg(2+)</name>
        <dbReference type="ChEBI" id="CHEBI:18420"/>
    </ligand>
</feature>
<feature type="binding site" evidence="1">
    <location>
        <begin position="100"/>
        <end position="103"/>
    </location>
    <ligand>
        <name>ATP</name>
        <dbReference type="ChEBI" id="CHEBI:30616"/>
    </ligand>
</feature>
<feature type="binding site" evidence="1">
    <location>
        <position position="100"/>
    </location>
    <ligand>
        <name>Mg(2+)</name>
        <dbReference type="ChEBI" id="CHEBI:18420"/>
    </ligand>
</feature>
<feature type="binding site" evidence="1">
    <location>
        <begin position="184"/>
        <end position="186"/>
    </location>
    <ligand>
        <name>ATP</name>
        <dbReference type="ChEBI" id="CHEBI:30616"/>
    </ligand>
</feature>